<keyword id="KW-1032">Host cell membrane</keyword>
<keyword id="KW-1043">Host membrane</keyword>
<keyword id="KW-0945">Host-virus interaction</keyword>
<keyword id="KW-0446">Lipid-binding</keyword>
<keyword id="KW-0472">Membrane</keyword>
<keyword id="KW-0261">Viral envelope protein</keyword>
<keyword id="KW-0468">Viral matrix protein</keyword>
<keyword id="KW-0946">Virion</keyword>
<dbReference type="EMBL" id="D00495">
    <property type="protein sequence ID" value="BAA00381.1"/>
    <property type="molecule type" value="Genomic_RNA"/>
</dbReference>
<dbReference type="SMR" id="P16628"/>
<dbReference type="GO" id="GO:0020002">
    <property type="term" value="C:host cell plasma membrane"/>
    <property type="evidence" value="ECO:0007669"/>
    <property type="project" value="UniProtKB-SubCell"/>
</dbReference>
<dbReference type="GO" id="GO:0016020">
    <property type="term" value="C:membrane"/>
    <property type="evidence" value="ECO:0007669"/>
    <property type="project" value="UniProtKB-KW"/>
</dbReference>
<dbReference type="GO" id="GO:0019031">
    <property type="term" value="C:viral envelope"/>
    <property type="evidence" value="ECO:0007669"/>
    <property type="project" value="UniProtKB-KW"/>
</dbReference>
<dbReference type="GO" id="GO:0008289">
    <property type="term" value="F:lipid binding"/>
    <property type="evidence" value="ECO:0007669"/>
    <property type="project" value="UniProtKB-KW"/>
</dbReference>
<dbReference type="GO" id="GO:0039660">
    <property type="term" value="F:structural constituent of virion"/>
    <property type="evidence" value="ECO:0007669"/>
    <property type="project" value="UniProtKB-KW"/>
</dbReference>
<dbReference type="GO" id="GO:0019068">
    <property type="term" value="P:virion assembly"/>
    <property type="evidence" value="ECO:0007669"/>
    <property type="project" value="InterPro"/>
</dbReference>
<dbReference type="FunFam" id="2.70.20.50:FF:000001">
    <property type="entry name" value="Matrix protein"/>
    <property type="match status" value="1"/>
</dbReference>
<dbReference type="FunFam" id="2.70.20.60:FF:000001">
    <property type="entry name" value="Matrix protein"/>
    <property type="match status" value="1"/>
</dbReference>
<dbReference type="Gene3D" id="2.70.20.60">
    <property type="entry name" value="Viral matrix protein, C-terminal domain"/>
    <property type="match status" value="1"/>
</dbReference>
<dbReference type="Gene3D" id="2.70.20.50">
    <property type="entry name" value="Viral matrix protein, N-terminal domain"/>
    <property type="match status" value="1"/>
</dbReference>
<dbReference type="InterPro" id="IPR042539">
    <property type="entry name" value="Matrix_C"/>
</dbReference>
<dbReference type="InterPro" id="IPR042540">
    <property type="entry name" value="Matrix_N"/>
</dbReference>
<dbReference type="InterPro" id="IPR055413">
    <property type="entry name" value="Matrix_Paramyxo_C"/>
</dbReference>
<dbReference type="InterPro" id="IPR000982">
    <property type="entry name" value="Matrix_Paramyxo_N"/>
</dbReference>
<dbReference type="Pfam" id="PF23765">
    <property type="entry name" value="Matrix_Paramyxo_C"/>
    <property type="match status" value="1"/>
</dbReference>
<dbReference type="Pfam" id="PF00661">
    <property type="entry name" value="Matrix_Paramyxo_N"/>
    <property type="match status" value="1"/>
</dbReference>
<accession>P16628</accession>
<sequence>MTEIYDFDKSAWDIKGSIAPTQPTTHSEGRLVPQVRVIDPGPGDRKDECLMYMSLLGVVEDSDPLGPPIGRAFGSPPLGVGRSTAKPEELLKEATELDIVVRRTAGLNEKLVFYNNTPLTLPTPWRKVPTTGSVFNANQVCNAVNLTPLDTPQRFRVVYTSITRLSDNGHYTVPRRMLEFRSVNAVAFNLLATLRIDKAIGHGKIIDNAEQLPEATFMVHIGNFRRKKSEVYSADHCKMEIEKMGLVFALGGIGGTSPHIRSTGKMSKTLHAQLGFKKTLCYPLMDINEDLNRLLWRSRCKIARIQAVLQPSVPQEFRIYDDVIINDDQGLFKALQTVVPSNA</sequence>
<comment type="function">
    <text evidence="1">The M protein has a crucial role in virus assembly and interacts with the RNP complex as well as with the viral membrane. Associates with phosphatidylserine (PS) and phosphatidylinositol 4,5-bisphosphate (PIP2) at the plasma membrane. Interaction with PIP2 triggers matrix protein lattice polymerization. Matrix proteins induce host membrane deformation and curvature necessary for virion assembly/budding.</text>
</comment>
<comment type="subunit">
    <text evidence="1">Homodimer. Dimerization is critical for virion formation. Interacts with host ANP32B.</text>
</comment>
<comment type="subcellular location">
    <subcellularLocation>
        <location evidence="1">Virion</location>
    </subcellularLocation>
    <subcellularLocation>
        <location evidence="1">Host cell membrane</location>
    </subcellularLocation>
</comment>
<comment type="similarity">
    <text evidence="2">Belongs to the morbillivirus/respirovirus/rubulavirus M protein family.</text>
</comment>
<gene>
    <name type="primary">M</name>
</gene>
<name>MATRX_MEASB</name>
<organism>
    <name type="scientific">Measles virus (strain Biken)</name>
    <name type="common">MeV</name>
    <name type="synonym">Subacute sclerosing panencephalitis virus (strain Biken)</name>
    <dbReference type="NCBI Taxonomy" id="351669"/>
    <lineage>
        <taxon>Viruses</taxon>
        <taxon>Riboviria</taxon>
        <taxon>Orthornavirae</taxon>
        <taxon>Negarnaviricota</taxon>
        <taxon>Haploviricotina</taxon>
        <taxon>Monjiviricetes</taxon>
        <taxon>Mononegavirales</taxon>
        <taxon>Paramyxoviridae</taxon>
        <taxon>Orthoparamyxovirinae</taxon>
        <taxon>Morbillivirus</taxon>
        <taxon>Morbillivirus hominis</taxon>
        <taxon>Measles morbillivirus</taxon>
    </lineage>
</organism>
<feature type="chain" id="PRO_0000142751" description="Matrix protein">
    <location>
        <begin position="1"/>
        <end position="343"/>
    </location>
</feature>
<reference key="1">
    <citation type="journal article" date="1989" name="J. Gen. Virol.">
        <title>Matrix protein of cell-associated subacute sclerosing panencephalitis viruses.</title>
        <authorList>
            <person name="Enami M."/>
            <person name="Sato T.A."/>
            <person name="Sugiura A."/>
        </authorList>
    </citation>
    <scope>NUCLEOTIDE SEQUENCE [GENOMIC RNA]</scope>
</reference>
<protein>
    <recommendedName>
        <fullName>Matrix protein</fullName>
    </recommendedName>
</protein>
<evidence type="ECO:0000250" key="1">
    <source>
        <dbReference type="UniProtKB" id="Q9W850"/>
    </source>
</evidence>
<evidence type="ECO:0000305" key="2"/>
<proteinExistence type="inferred from homology"/>
<organismHost>
    <name type="scientific">Homo sapiens</name>
    <name type="common">Human</name>
    <dbReference type="NCBI Taxonomy" id="9606"/>
</organismHost>